<accession>Q7GGQ9</accession>
<feature type="chain" id="PRO_0000254874" description="Cytochrome b">
    <location>
        <begin position="1"/>
        <end position="379"/>
    </location>
</feature>
<feature type="transmembrane region" description="Helical" evidence="2">
    <location>
        <begin position="33"/>
        <end position="53"/>
    </location>
</feature>
<feature type="transmembrane region" description="Helical" evidence="2">
    <location>
        <begin position="77"/>
        <end position="98"/>
    </location>
</feature>
<feature type="transmembrane region" description="Helical" evidence="2">
    <location>
        <begin position="113"/>
        <end position="133"/>
    </location>
</feature>
<feature type="transmembrane region" description="Helical" evidence="2">
    <location>
        <begin position="178"/>
        <end position="198"/>
    </location>
</feature>
<feature type="transmembrane region" description="Helical" evidence="2">
    <location>
        <begin position="226"/>
        <end position="246"/>
    </location>
</feature>
<feature type="transmembrane region" description="Helical" evidence="2">
    <location>
        <begin position="288"/>
        <end position="308"/>
    </location>
</feature>
<feature type="transmembrane region" description="Helical" evidence="2">
    <location>
        <begin position="320"/>
        <end position="340"/>
    </location>
</feature>
<feature type="transmembrane region" description="Helical" evidence="2">
    <location>
        <begin position="347"/>
        <end position="367"/>
    </location>
</feature>
<feature type="binding site" description="axial binding residue" evidence="2">
    <location>
        <position position="83"/>
    </location>
    <ligand>
        <name>heme b</name>
        <dbReference type="ChEBI" id="CHEBI:60344"/>
        <label>b562</label>
    </ligand>
    <ligandPart>
        <name>Fe</name>
        <dbReference type="ChEBI" id="CHEBI:18248"/>
    </ligandPart>
</feature>
<feature type="binding site" description="axial binding residue" evidence="2">
    <location>
        <position position="97"/>
    </location>
    <ligand>
        <name>heme b</name>
        <dbReference type="ChEBI" id="CHEBI:60344"/>
        <label>b566</label>
    </ligand>
    <ligandPart>
        <name>Fe</name>
        <dbReference type="ChEBI" id="CHEBI:18248"/>
    </ligandPart>
</feature>
<feature type="binding site" description="axial binding residue" evidence="2">
    <location>
        <position position="182"/>
    </location>
    <ligand>
        <name>heme b</name>
        <dbReference type="ChEBI" id="CHEBI:60344"/>
        <label>b562</label>
    </ligand>
    <ligandPart>
        <name>Fe</name>
        <dbReference type="ChEBI" id="CHEBI:18248"/>
    </ligandPart>
</feature>
<feature type="binding site" description="axial binding residue" evidence="2">
    <location>
        <position position="196"/>
    </location>
    <ligand>
        <name>heme b</name>
        <dbReference type="ChEBI" id="CHEBI:60344"/>
        <label>b566</label>
    </ligand>
    <ligandPart>
        <name>Fe</name>
        <dbReference type="ChEBI" id="CHEBI:18248"/>
    </ligandPart>
</feature>
<feature type="binding site" evidence="2">
    <location>
        <position position="201"/>
    </location>
    <ligand>
        <name>a ubiquinone</name>
        <dbReference type="ChEBI" id="CHEBI:16389"/>
    </ligand>
</feature>
<organism>
    <name type="scientific">Helarctos malayanus</name>
    <name type="common">Malayan sun bear</name>
    <name type="synonym">Ursus malayanus</name>
    <dbReference type="NCBI Taxonomy" id="9634"/>
    <lineage>
        <taxon>Eukaryota</taxon>
        <taxon>Metazoa</taxon>
        <taxon>Chordata</taxon>
        <taxon>Craniata</taxon>
        <taxon>Vertebrata</taxon>
        <taxon>Euteleostomi</taxon>
        <taxon>Mammalia</taxon>
        <taxon>Eutheria</taxon>
        <taxon>Laurasiatheria</taxon>
        <taxon>Carnivora</taxon>
        <taxon>Caniformia</taxon>
        <taxon>Ursidae</taxon>
        <taxon>Helarctos</taxon>
    </lineage>
</organism>
<protein>
    <recommendedName>
        <fullName>Cytochrome b</fullName>
    </recommendedName>
    <alternativeName>
        <fullName>Complex III subunit 3</fullName>
    </alternativeName>
    <alternativeName>
        <fullName>Complex III subunit III</fullName>
    </alternativeName>
    <alternativeName>
        <fullName>Cytochrome b-c1 complex subunit 3</fullName>
    </alternativeName>
    <alternativeName>
        <fullName>Ubiquinol-cytochrome-c reductase complex cytochrome b subunit</fullName>
    </alternativeName>
</protein>
<comment type="function">
    <text evidence="2">Component of the ubiquinol-cytochrome c reductase complex (complex III or cytochrome b-c1 complex) that is part of the mitochondrial respiratory chain. The b-c1 complex mediates electron transfer from ubiquinol to cytochrome c. Contributes to the generation of a proton gradient across the mitochondrial membrane that is then used for ATP synthesis.</text>
</comment>
<comment type="cofactor">
    <cofactor evidence="2">
        <name>heme b</name>
        <dbReference type="ChEBI" id="CHEBI:60344"/>
    </cofactor>
    <text evidence="2">Binds 2 heme b groups non-covalently.</text>
</comment>
<comment type="subunit">
    <text evidence="2">The cytochrome bc1 complex contains 11 subunits: 3 respiratory subunits (MT-CYB, CYC1 and UQCRFS1), 2 core proteins (UQCRC1 and UQCRC2) and 6 low-molecular weight proteins (UQCRH/QCR6, UQCRB/QCR7, UQCRQ/QCR8, UQCR10/QCR9, UQCR11/QCR10 and a cleavage product of UQCRFS1). This cytochrome bc1 complex then forms a dimer.</text>
</comment>
<comment type="subcellular location">
    <subcellularLocation>
        <location evidence="2">Mitochondrion inner membrane</location>
        <topology evidence="2">Multi-pass membrane protein</topology>
    </subcellularLocation>
</comment>
<comment type="miscellaneous">
    <text evidence="1">Heme 1 (or BL or b562) is low-potential and absorbs at about 562 nm, and heme 2 (or BH or b566) is high-potential and absorbs at about 566 nm.</text>
</comment>
<comment type="similarity">
    <text evidence="3 4">Belongs to the cytochrome b family.</text>
</comment>
<comment type="caution">
    <text evidence="2">The full-length protein contains only eight transmembrane helices, not nine as predicted by bioinformatics tools.</text>
</comment>
<gene>
    <name type="primary">MT-CYB</name>
    <name type="synonym">COB</name>
    <name type="synonym">CYTB</name>
    <name type="synonym">MTCYB</name>
</gene>
<reference key="1">
    <citation type="journal article" date="1996" name="Mol. Phylogenet. Evol.">
        <title>Phylogeography of brown bears (Ursus arctos) of Alaska and paraphyly within the Ursidae.</title>
        <authorList>
            <person name="Talbot S.L."/>
            <person name="Shields G.F."/>
        </authorList>
    </citation>
    <scope>NUCLEOTIDE SEQUENCE [GENOMIC DNA]</scope>
    <source>
        <tissue>Blood</tissue>
    </source>
</reference>
<evidence type="ECO:0000250" key="1"/>
<evidence type="ECO:0000250" key="2">
    <source>
        <dbReference type="UniProtKB" id="P00157"/>
    </source>
</evidence>
<evidence type="ECO:0000255" key="3">
    <source>
        <dbReference type="PROSITE-ProRule" id="PRU00967"/>
    </source>
</evidence>
<evidence type="ECO:0000255" key="4">
    <source>
        <dbReference type="PROSITE-ProRule" id="PRU00968"/>
    </source>
</evidence>
<proteinExistence type="inferred from homology"/>
<name>CYB_HELMA</name>
<keyword id="KW-0249">Electron transport</keyword>
<keyword id="KW-0349">Heme</keyword>
<keyword id="KW-0408">Iron</keyword>
<keyword id="KW-0472">Membrane</keyword>
<keyword id="KW-0479">Metal-binding</keyword>
<keyword id="KW-0496">Mitochondrion</keyword>
<keyword id="KW-0999">Mitochondrion inner membrane</keyword>
<keyword id="KW-0679">Respiratory chain</keyword>
<keyword id="KW-0812">Transmembrane</keyword>
<keyword id="KW-1133">Transmembrane helix</keyword>
<keyword id="KW-0813">Transport</keyword>
<keyword id="KW-0830">Ubiquinone</keyword>
<dbReference type="EMBL" id="U18899">
    <property type="protein sequence ID" value="AAB38165.1"/>
    <property type="molecule type" value="Genomic_DNA"/>
</dbReference>
<dbReference type="RefSeq" id="YP_001542767.1">
    <property type="nucleotide sequence ID" value="NC_009968.1"/>
</dbReference>
<dbReference type="SMR" id="Q7GGQ9"/>
<dbReference type="GeneID" id="5729814"/>
<dbReference type="CTD" id="4519"/>
<dbReference type="GO" id="GO:0005743">
    <property type="term" value="C:mitochondrial inner membrane"/>
    <property type="evidence" value="ECO:0007669"/>
    <property type="project" value="UniProtKB-SubCell"/>
</dbReference>
<dbReference type="GO" id="GO:0045275">
    <property type="term" value="C:respiratory chain complex III"/>
    <property type="evidence" value="ECO:0007669"/>
    <property type="project" value="InterPro"/>
</dbReference>
<dbReference type="GO" id="GO:0046872">
    <property type="term" value="F:metal ion binding"/>
    <property type="evidence" value="ECO:0007669"/>
    <property type="project" value="UniProtKB-KW"/>
</dbReference>
<dbReference type="GO" id="GO:0008121">
    <property type="term" value="F:ubiquinol-cytochrome-c reductase activity"/>
    <property type="evidence" value="ECO:0007669"/>
    <property type="project" value="InterPro"/>
</dbReference>
<dbReference type="GO" id="GO:0006122">
    <property type="term" value="P:mitochondrial electron transport, ubiquinol to cytochrome c"/>
    <property type="evidence" value="ECO:0007669"/>
    <property type="project" value="TreeGrafter"/>
</dbReference>
<dbReference type="CDD" id="cd00290">
    <property type="entry name" value="cytochrome_b_C"/>
    <property type="match status" value="1"/>
</dbReference>
<dbReference type="CDD" id="cd00284">
    <property type="entry name" value="Cytochrome_b_N"/>
    <property type="match status" value="1"/>
</dbReference>
<dbReference type="FunFam" id="1.20.810.10:FF:000002">
    <property type="entry name" value="Cytochrome b"/>
    <property type="match status" value="1"/>
</dbReference>
<dbReference type="Gene3D" id="1.20.810.10">
    <property type="entry name" value="Cytochrome Bc1 Complex, Chain C"/>
    <property type="match status" value="1"/>
</dbReference>
<dbReference type="InterPro" id="IPR005798">
    <property type="entry name" value="Cyt_b/b6_C"/>
</dbReference>
<dbReference type="InterPro" id="IPR036150">
    <property type="entry name" value="Cyt_b/b6_C_sf"/>
</dbReference>
<dbReference type="InterPro" id="IPR005797">
    <property type="entry name" value="Cyt_b/b6_N"/>
</dbReference>
<dbReference type="InterPro" id="IPR027387">
    <property type="entry name" value="Cytb/b6-like_sf"/>
</dbReference>
<dbReference type="InterPro" id="IPR030689">
    <property type="entry name" value="Cytochrome_b"/>
</dbReference>
<dbReference type="InterPro" id="IPR048260">
    <property type="entry name" value="Cytochrome_b_C_euk/bac"/>
</dbReference>
<dbReference type="InterPro" id="IPR048259">
    <property type="entry name" value="Cytochrome_b_N_euk/bac"/>
</dbReference>
<dbReference type="InterPro" id="IPR016174">
    <property type="entry name" value="Di-haem_cyt_TM"/>
</dbReference>
<dbReference type="PANTHER" id="PTHR19271">
    <property type="entry name" value="CYTOCHROME B"/>
    <property type="match status" value="1"/>
</dbReference>
<dbReference type="PANTHER" id="PTHR19271:SF16">
    <property type="entry name" value="CYTOCHROME B"/>
    <property type="match status" value="1"/>
</dbReference>
<dbReference type="Pfam" id="PF00032">
    <property type="entry name" value="Cytochrom_B_C"/>
    <property type="match status" value="1"/>
</dbReference>
<dbReference type="Pfam" id="PF00033">
    <property type="entry name" value="Cytochrome_B"/>
    <property type="match status" value="1"/>
</dbReference>
<dbReference type="PIRSF" id="PIRSF038885">
    <property type="entry name" value="COB"/>
    <property type="match status" value="1"/>
</dbReference>
<dbReference type="SUPFAM" id="SSF81648">
    <property type="entry name" value="a domain/subunit of cytochrome bc1 complex (Ubiquinol-cytochrome c reductase)"/>
    <property type="match status" value="1"/>
</dbReference>
<dbReference type="SUPFAM" id="SSF81342">
    <property type="entry name" value="Transmembrane di-heme cytochromes"/>
    <property type="match status" value="1"/>
</dbReference>
<dbReference type="PROSITE" id="PS51003">
    <property type="entry name" value="CYTB_CTER"/>
    <property type="match status" value="1"/>
</dbReference>
<dbReference type="PROSITE" id="PS51002">
    <property type="entry name" value="CYTB_NTER"/>
    <property type="match status" value="1"/>
</dbReference>
<geneLocation type="mitochondrion"/>
<sequence length="379" mass="42561">MTNIRKTHPLAKIINNSLIDLPAPSNISAWWNFGSLLGVCLILQIMTGLFLAMHYTSDTTTAFSSITHICRDVHYGWIIRYMHANGASMFFICLFMHVGRGLYYGSYLFSETWNIGIILLFTVMATAFMGYVLPWGQMSFWGATVITNLLSAIPYIGTDLVEWVWGGFSVDKATLTRFFAFHFILPFIILALTAVHLLFLHETGSNNPSGIPSDSDKIPFHPYYTIKDILGALLLTLALTTLVLFSPDLLGDPDNYIPANPLSTPPHIKPEWYFLFAYAILRSIPNKLGGVLALVFSILILAIIPLLHTSKQRGMMFRPLSQCLFWLLVADLLTLTWIGGQPVEHPFTIIGQLASILYFMIFLVFMPIAGIIENNLSKW</sequence>